<proteinExistence type="evidence at protein level"/>
<gene>
    <name type="primary">gap</name>
    <name type="synonym">gapC</name>
    <name type="ordered locus">CA_C0709</name>
</gene>
<protein>
    <recommendedName>
        <fullName evidence="5">Glyceraldehyde-3-phosphate dehydrogenase</fullName>
        <shortName evidence="5">GAPDH</shortName>
        <ecNumber evidence="2">1.2.1.12</ecNumber>
    </recommendedName>
    <alternativeName>
        <fullName evidence="5">NAD-dependent glyceraldehyde-3-phosphate dehydrogenase</fullName>
    </alternativeName>
</protein>
<reference key="1">
    <citation type="journal article" date="1999" name="Microbiology">
        <title>The glyceraldehyde-3-phosphate dehydrogenase of Clostridium acetobutylicum: isolation and purification of the enzyme, and sequencing and localization of the gap gene within a cluster of other glycolytic genes.</title>
        <authorList>
            <person name="Schreiber W."/>
            <person name="Durre P."/>
        </authorList>
    </citation>
    <scope>NUCLEOTIDE SEQUENCE [GENOMIC DNA]</scope>
    <scope>FUNCTION</scope>
    <scope>BIOPHYSICOCHEMICAL PROPERTIES</scope>
    <scope>SUBUNIT</scope>
    <source>
        <strain>ATCC 824 / DSM 792 / JCM 1419 / IAM 19013 / LMG 5710 / NBRC 13948 / NRRL B-527 / VKM B-1787 / 2291 / W</strain>
    </source>
</reference>
<reference key="2">
    <citation type="journal article" date="2001" name="J. Bacteriol.">
        <title>Genome sequence and comparative analysis of the solvent-producing bacterium Clostridium acetobutylicum.</title>
        <authorList>
            <person name="Noelling J."/>
            <person name="Breton G."/>
            <person name="Omelchenko M.V."/>
            <person name="Makarova K.S."/>
            <person name="Zeng Q."/>
            <person name="Gibson R."/>
            <person name="Lee H.M."/>
            <person name="Dubois J."/>
            <person name="Qiu D."/>
            <person name="Hitti J."/>
            <person name="Wolf Y.I."/>
            <person name="Tatusov R.L."/>
            <person name="Sabathe F."/>
            <person name="Doucette-Stamm L.A."/>
            <person name="Soucaille P."/>
            <person name="Daly M.J."/>
            <person name="Bennett G.N."/>
            <person name="Koonin E.V."/>
            <person name="Smith D.R."/>
        </authorList>
    </citation>
    <scope>NUCLEOTIDE SEQUENCE [LARGE SCALE GENOMIC DNA]</scope>
    <source>
        <strain>ATCC 824 / DSM 792 / JCM 1419 / IAM 19013 / LMG 5710 / NBRC 13948 / NRRL B-527 / VKM B-1787 / 2291 / W</strain>
    </source>
</reference>
<name>G3P_CLOAB</name>
<dbReference type="EC" id="1.2.1.12" evidence="2"/>
<dbReference type="EMBL" id="AF043386">
    <property type="protein sequence ID" value="AAC13160.1"/>
    <property type="molecule type" value="Genomic_DNA"/>
</dbReference>
<dbReference type="EMBL" id="AE001437">
    <property type="protein sequence ID" value="AAK78686.1"/>
    <property type="molecule type" value="Genomic_DNA"/>
</dbReference>
<dbReference type="PIR" id="C96987">
    <property type="entry name" value="C96987"/>
</dbReference>
<dbReference type="RefSeq" id="NP_347346.1">
    <property type="nucleotide sequence ID" value="NC_003030.1"/>
</dbReference>
<dbReference type="RefSeq" id="WP_010964028.1">
    <property type="nucleotide sequence ID" value="NC_003030.1"/>
</dbReference>
<dbReference type="SMR" id="O52631"/>
<dbReference type="STRING" id="272562.CA_C0709"/>
<dbReference type="GeneID" id="44997220"/>
<dbReference type="KEGG" id="cac:CA_C0709"/>
<dbReference type="PATRIC" id="fig|272562.8.peg.912"/>
<dbReference type="eggNOG" id="COG0057">
    <property type="taxonomic scope" value="Bacteria"/>
</dbReference>
<dbReference type="HOGENOM" id="CLU_030140_0_0_9"/>
<dbReference type="OrthoDB" id="9803304at2"/>
<dbReference type="BRENDA" id="1.2.1.59">
    <property type="organism ID" value="1452"/>
</dbReference>
<dbReference type="UniPathway" id="UPA00109">
    <property type="reaction ID" value="UER00184"/>
</dbReference>
<dbReference type="Proteomes" id="UP000000814">
    <property type="component" value="Chromosome"/>
</dbReference>
<dbReference type="GO" id="GO:0005737">
    <property type="term" value="C:cytoplasm"/>
    <property type="evidence" value="ECO:0007669"/>
    <property type="project" value="UniProtKB-SubCell"/>
</dbReference>
<dbReference type="GO" id="GO:0004365">
    <property type="term" value="F:glyceraldehyde-3-phosphate dehydrogenase (NAD+) (phosphorylating) activity"/>
    <property type="evidence" value="ECO:0000250"/>
    <property type="project" value="UniProtKB"/>
</dbReference>
<dbReference type="GO" id="GO:0051287">
    <property type="term" value="F:NAD binding"/>
    <property type="evidence" value="ECO:0000314"/>
    <property type="project" value="UniProtKB"/>
</dbReference>
<dbReference type="GO" id="GO:0050661">
    <property type="term" value="F:NADP binding"/>
    <property type="evidence" value="ECO:0007669"/>
    <property type="project" value="InterPro"/>
</dbReference>
<dbReference type="GO" id="GO:0006006">
    <property type="term" value="P:glucose metabolic process"/>
    <property type="evidence" value="ECO:0007669"/>
    <property type="project" value="InterPro"/>
</dbReference>
<dbReference type="GO" id="GO:0006096">
    <property type="term" value="P:glycolytic process"/>
    <property type="evidence" value="ECO:0007669"/>
    <property type="project" value="UniProtKB-UniPathway"/>
</dbReference>
<dbReference type="CDD" id="cd18126">
    <property type="entry name" value="GAPDH_I_C"/>
    <property type="match status" value="1"/>
</dbReference>
<dbReference type="CDD" id="cd05214">
    <property type="entry name" value="GAPDH_I_N"/>
    <property type="match status" value="1"/>
</dbReference>
<dbReference type="FunFam" id="3.30.360.10:FF:000002">
    <property type="entry name" value="Glyceraldehyde-3-phosphate dehydrogenase"/>
    <property type="match status" value="1"/>
</dbReference>
<dbReference type="FunFam" id="3.40.50.720:FF:000001">
    <property type="entry name" value="Glyceraldehyde-3-phosphate dehydrogenase"/>
    <property type="match status" value="1"/>
</dbReference>
<dbReference type="Gene3D" id="3.30.360.10">
    <property type="entry name" value="Dihydrodipicolinate Reductase, domain 2"/>
    <property type="match status" value="1"/>
</dbReference>
<dbReference type="Gene3D" id="3.40.50.720">
    <property type="entry name" value="NAD(P)-binding Rossmann-like Domain"/>
    <property type="match status" value="1"/>
</dbReference>
<dbReference type="InterPro" id="IPR020831">
    <property type="entry name" value="GlycerAld/Erythrose_P_DH"/>
</dbReference>
<dbReference type="InterPro" id="IPR020830">
    <property type="entry name" value="GlycerAld_3-P_DH_AS"/>
</dbReference>
<dbReference type="InterPro" id="IPR020829">
    <property type="entry name" value="GlycerAld_3-P_DH_cat"/>
</dbReference>
<dbReference type="InterPro" id="IPR020828">
    <property type="entry name" value="GlycerAld_3-P_DH_NAD(P)-bd"/>
</dbReference>
<dbReference type="InterPro" id="IPR006424">
    <property type="entry name" value="Glyceraldehyde-3-P_DH_1"/>
</dbReference>
<dbReference type="InterPro" id="IPR036291">
    <property type="entry name" value="NAD(P)-bd_dom_sf"/>
</dbReference>
<dbReference type="NCBIfam" id="TIGR01534">
    <property type="entry name" value="GAPDH-I"/>
    <property type="match status" value="1"/>
</dbReference>
<dbReference type="PANTHER" id="PTHR43148">
    <property type="entry name" value="GLYCERALDEHYDE-3-PHOSPHATE DEHYDROGENASE 2"/>
    <property type="match status" value="1"/>
</dbReference>
<dbReference type="Pfam" id="PF02800">
    <property type="entry name" value="Gp_dh_C"/>
    <property type="match status" value="1"/>
</dbReference>
<dbReference type="Pfam" id="PF00044">
    <property type="entry name" value="Gp_dh_N"/>
    <property type="match status" value="1"/>
</dbReference>
<dbReference type="PIRSF" id="PIRSF000149">
    <property type="entry name" value="GAP_DH"/>
    <property type="match status" value="1"/>
</dbReference>
<dbReference type="PRINTS" id="PR00078">
    <property type="entry name" value="G3PDHDRGNASE"/>
</dbReference>
<dbReference type="SMART" id="SM00846">
    <property type="entry name" value="Gp_dh_N"/>
    <property type="match status" value="1"/>
</dbReference>
<dbReference type="SUPFAM" id="SSF55347">
    <property type="entry name" value="Glyceraldehyde-3-phosphate dehydrogenase-like, C-terminal domain"/>
    <property type="match status" value="1"/>
</dbReference>
<dbReference type="SUPFAM" id="SSF51735">
    <property type="entry name" value="NAD(P)-binding Rossmann-fold domains"/>
    <property type="match status" value="1"/>
</dbReference>
<dbReference type="PROSITE" id="PS00071">
    <property type="entry name" value="GAPDH"/>
    <property type="match status" value="1"/>
</dbReference>
<organism>
    <name type="scientific">Clostridium acetobutylicum (strain ATCC 824 / DSM 792 / JCM 1419 / IAM 19013 / LMG 5710 / NBRC 13948 / NRRL B-527 / VKM B-1787 / 2291 / W)</name>
    <dbReference type="NCBI Taxonomy" id="272562"/>
    <lineage>
        <taxon>Bacteria</taxon>
        <taxon>Bacillati</taxon>
        <taxon>Bacillota</taxon>
        <taxon>Clostridia</taxon>
        <taxon>Eubacteriales</taxon>
        <taxon>Clostridiaceae</taxon>
        <taxon>Clostridium</taxon>
    </lineage>
</organism>
<comment type="function">
    <text evidence="4">Catalyzes the oxidative phosphorylation of glyceraldehyde 3-phosphate (G3P) to 1,3-bisphosphoglycerate (BPG) using the cofactor NAD. The first reaction step involves the formation of a hemiacetal intermediate between G3P and a cysteine residue, and this hemiacetal intermediate is then oxidized to a thioester, with concomitant reduction of NAD to NADH. The reduced NADH is then exchanged with the second NAD, and the thioester is attacked by a nucleophilic inorganic phosphate to produce BPG.</text>
</comment>
<comment type="catalytic activity">
    <reaction evidence="2">
        <text>D-glyceraldehyde 3-phosphate + phosphate + NAD(+) = (2R)-3-phospho-glyceroyl phosphate + NADH + H(+)</text>
        <dbReference type="Rhea" id="RHEA:10300"/>
        <dbReference type="ChEBI" id="CHEBI:15378"/>
        <dbReference type="ChEBI" id="CHEBI:43474"/>
        <dbReference type="ChEBI" id="CHEBI:57540"/>
        <dbReference type="ChEBI" id="CHEBI:57604"/>
        <dbReference type="ChEBI" id="CHEBI:57945"/>
        <dbReference type="ChEBI" id="CHEBI:59776"/>
        <dbReference type="EC" id="1.2.1.12"/>
    </reaction>
</comment>
<comment type="biophysicochemical properties">
    <phDependence>
        <text evidence="4">Optimum pH is 9.3. Above pH 10, stability decreases rapidly.</text>
    </phDependence>
    <temperatureDependence>
        <text evidence="4">Optimum temperature is 10 degrees Celsius. Above 65 degrees Celsius no activity is detected.</text>
    </temperatureDependence>
</comment>
<comment type="pathway">
    <text evidence="6">Carbohydrate degradation; glycolysis; pyruvate from D-glyceraldehyde 3-phosphate: step 1/5.</text>
</comment>
<comment type="subunit">
    <text evidence="4">Homotetramer.</text>
</comment>
<comment type="subcellular location">
    <subcellularLocation>
        <location evidence="6">Cytoplasm</location>
    </subcellularLocation>
</comment>
<comment type="similarity">
    <text evidence="6">Belongs to the glyceraldehyde-3-phosphate dehydrogenase family.</text>
</comment>
<feature type="chain" id="PRO_0000145645" description="Glyceraldehyde-3-phosphate dehydrogenase">
    <location>
        <begin position="1"/>
        <end position="334"/>
    </location>
</feature>
<feature type="active site" description="Nucleophile" evidence="1">
    <location>
        <position position="150"/>
    </location>
</feature>
<feature type="binding site" evidence="1">
    <location>
        <begin position="11"/>
        <end position="12"/>
    </location>
    <ligand>
        <name>NAD(+)</name>
        <dbReference type="ChEBI" id="CHEBI:57540"/>
    </ligand>
</feature>
<feature type="binding site" evidence="1">
    <location>
        <position position="33"/>
    </location>
    <ligand>
        <name>NAD(+)</name>
        <dbReference type="ChEBI" id="CHEBI:57540"/>
    </ligand>
</feature>
<feature type="binding site" evidence="1">
    <location>
        <position position="119"/>
    </location>
    <ligand>
        <name>NAD(+)</name>
        <dbReference type="ChEBI" id="CHEBI:57540"/>
    </ligand>
</feature>
<feature type="binding site" evidence="1">
    <location>
        <begin position="149"/>
        <end position="151"/>
    </location>
    <ligand>
        <name>D-glyceraldehyde 3-phosphate</name>
        <dbReference type="ChEBI" id="CHEBI:59776"/>
    </ligand>
</feature>
<feature type="binding site" evidence="1">
    <location>
        <position position="180"/>
    </location>
    <ligand>
        <name>D-glyceraldehyde 3-phosphate</name>
        <dbReference type="ChEBI" id="CHEBI:59776"/>
    </ligand>
</feature>
<feature type="binding site" evidence="1">
    <location>
        <position position="181"/>
    </location>
    <ligand>
        <name>NAD(+)</name>
        <dbReference type="ChEBI" id="CHEBI:57540"/>
    </ligand>
</feature>
<feature type="binding site" evidence="1">
    <location>
        <position position="197"/>
    </location>
    <ligand>
        <name>D-glyceraldehyde 3-phosphate</name>
        <dbReference type="ChEBI" id="CHEBI:59776"/>
    </ligand>
</feature>
<feature type="binding site" evidence="1">
    <location>
        <begin position="210"/>
        <end position="211"/>
    </location>
    <ligand>
        <name>D-glyceraldehyde 3-phosphate</name>
        <dbReference type="ChEBI" id="CHEBI:59776"/>
    </ligand>
</feature>
<feature type="binding site" evidence="1">
    <location>
        <position position="233"/>
    </location>
    <ligand>
        <name>D-glyceraldehyde 3-phosphate</name>
        <dbReference type="ChEBI" id="CHEBI:59776"/>
    </ligand>
</feature>
<feature type="binding site" evidence="1">
    <location>
        <position position="314"/>
    </location>
    <ligand>
        <name>NAD(+)</name>
        <dbReference type="ChEBI" id="CHEBI:57540"/>
    </ligand>
</feature>
<feature type="site" description="Activates thiol group during catalysis" evidence="3">
    <location>
        <position position="177"/>
    </location>
</feature>
<sequence>MAKIAINGFGRIGRLALRRILEVPGLEVVAINDLTDAKMLAHLFKYDSSQGRFNGEIEVKEGAFVVNGKEVKVFAEADPEKLPWGDLGIDVVLECTGFFTKKEKAEAHVRAGAKKVVISAPAGNDLKTIVFNVNNEDLDGTETVISGASCTTNCLAPMAKVLNDKFGIEKGFMTTIHAFTNDQNTLDGPHRKGDLRRARAAAVSIIPNSTGAAKAISQVIPDLAGKLDGNAQRVPVPTGSITELVSVLKKKVTVEEINAAMKEAADESFGYTEDPIVSADVVGINYGSLFDATLTKIVDVNGSQLVKTAAWYDNEMSYTSQLVRTLAYFAKIAK</sequence>
<evidence type="ECO:0000250" key="1">
    <source>
        <dbReference type="UniProtKB" id="P00362"/>
    </source>
</evidence>
<evidence type="ECO:0000250" key="2">
    <source>
        <dbReference type="UniProtKB" id="P09124"/>
    </source>
</evidence>
<evidence type="ECO:0000250" key="3">
    <source>
        <dbReference type="UniProtKB" id="Q6GIL8"/>
    </source>
</evidence>
<evidence type="ECO:0000269" key="4">
    <source>
    </source>
</evidence>
<evidence type="ECO:0000303" key="5">
    <source>
    </source>
</evidence>
<evidence type="ECO:0000305" key="6"/>
<keyword id="KW-0963">Cytoplasm</keyword>
<keyword id="KW-0324">Glycolysis</keyword>
<keyword id="KW-0520">NAD</keyword>
<keyword id="KW-0547">Nucleotide-binding</keyword>
<keyword id="KW-0560">Oxidoreductase</keyword>
<keyword id="KW-1185">Reference proteome</keyword>
<accession>O52631</accession>